<evidence type="ECO:0000250" key="1">
    <source>
        <dbReference type="UniProtKB" id="P04798"/>
    </source>
</evidence>
<evidence type="ECO:0000269" key="2">
    <source>
    </source>
</evidence>
<evidence type="ECO:0000269" key="3">
    <source>
    </source>
</evidence>
<evidence type="ECO:0000303" key="4">
    <source>
    </source>
</evidence>
<evidence type="ECO:0000305" key="5"/>
<evidence type="ECO:0000305" key="6">
    <source>
    </source>
</evidence>
<reference key="1">
    <citation type="journal article" date="2012" name="Med. Chem. Commun.">
        <title>Comparative analysis of the biosynthetic systems for fungal bicyclo[2.2.2]diazaoctane indole alkaloids: the (+)/(-)-notoamide, paraherquamide and malbrancheamide pathways.</title>
        <authorList>
            <person name="Li S."/>
            <person name="Anand K."/>
            <person name="Tran H."/>
            <person name="Yu F."/>
            <person name="Finefield J.M."/>
            <person name="Sunderhaus J.D."/>
            <person name="McAfoos T.J."/>
            <person name="Tsukamoto S."/>
            <person name="Williams R.M."/>
            <person name="Sherman D.H."/>
        </authorList>
    </citation>
    <scope>NUCLEOTIDE SEQUENCE [GENOMIC DNA]</scope>
    <scope>FUNCTION</scope>
    <scope>PATHWAY</scope>
    <source>
        <strain>ATCC 20841 / MF5123</strain>
    </source>
</reference>
<reference key="2">
    <citation type="journal article" date="2019" name="Nat. Chem.">
        <title>Fungal indole alkaloid biogenesis through evolution of a bifunctional reductase/Diels-Alderase.</title>
        <authorList>
            <person name="Dan Q."/>
            <person name="Newmister S.A."/>
            <person name="Klas K.R."/>
            <person name="Fraley A.E."/>
            <person name="McAfoos T.J."/>
            <person name="Somoza A.D."/>
            <person name="Sunderhaus J.D."/>
            <person name="Ye Y."/>
            <person name="Shende V.V."/>
            <person name="Yu F."/>
            <person name="Sanders J.N."/>
            <person name="Brown W.C."/>
            <person name="Zhao L."/>
            <person name="Paton R.S."/>
            <person name="Houk K.N."/>
            <person name="Smith J.L."/>
            <person name="Sherman D.H."/>
            <person name="Williams R.M."/>
        </authorList>
    </citation>
    <scope>FUNCTION</scope>
</reference>
<keyword id="KW-0349">Heme</keyword>
<keyword id="KW-0408">Iron</keyword>
<keyword id="KW-0479">Metal-binding</keyword>
<keyword id="KW-0503">Monooxygenase</keyword>
<keyword id="KW-0560">Oxidoreductase</keyword>
<organism>
    <name type="scientific">Penicillium fellutanum</name>
    <dbReference type="NCBI Taxonomy" id="70095"/>
    <lineage>
        <taxon>Eukaryota</taxon>
        <taxon>Fungi</taxon>
        <taxon>Dikarya</taxon>
        <taxon>Ascomycota</taxon>
        <taxon>Pezizomycotina</taxon>
        <taxon>Eurotiomycetes</taxon>
        <taxon>Eurotiomycetidae</taxon>
        <taxon>Eurotiales</taxon>
        <taxon>Aspergillaceae</taxon>
        <taxon>Penicillium</taxon>
    </lineage>
</organism>
<feature type="chain" id="PRO_0000448875" description="Cytochrome P450 monooxygenase phqO">
    <location>
        <begin position="1"/>
        <end position="436"/>
    </location>
</feature>
<feature type="binding site" description="axial binding residue" evidence="1">
    <location>
        <position position="377"/>
    </location>
    <ligand>
        <name>heme</name>
        <dbReference type="ChEBI" id="CHEBI:30413"/>
    </ligand>
    <ligandPart>
        <name>Fe</name>
        <dbReference type="ChEBI" id="CHEBI:18248"/>
    </ligandPart>
</feature>
<protein>
    <recommendedName>
        <fullName evidence="4">Cytochrome P450 monooxygenase phqO</fullName>
        <ecNumber evidence="6">1.-.-.-</ecNumber>
    </recommendedName>
    <alternativeName>
        <fullName evidence="4">Paraherquamide biosynthesis cluster protein O</fullName>
    </alternativeName>
</protein>
<dbReference type="EC" id="1.-.-.-" evidence="6"/>
<dbReference type="EMBL" id="JQ708195">
    <property type="protein sequence ID" value="AGA37282.1"/>
    <property type="molecule type" value="Genomic_DNA"/>
</dbReference>
<dbReference type="SMR" id="L0E307"/>
<dbReference type="GO" id="GO:0020037">
    <property type="term" value="F:heme binding"/>
    <property type="evidence" value="ECO:0007669"/>
    <property type="project" value="InterPro"/>
</dbReference>
<dbReference type="GO" id="GO:0005506">
    <property type="term" value="F:iron ion binding"/>
    <property type="evidence" value="ECO:0007669"/>
    <property type="project" value="InterPro"/>
</dbReference>
<dbReference type="GO" id="GO:0004497">
    <property type="term" value="F:monooxygenase activity"/>
    <property type="evidence" value="ECO:0007669"/>
    <property type="project" value="UniProtKB-KW"/>
</dbReference>
<dbReference type="GO" id="GO:0016705">
    <property type="term" value="F:oxidoreductase activity, acting on paired donors, with incorporation or reduction of molecular oxygen"/>
    <property type="evidence" value="ECO:0007669"/>
    <property type="project" value="InterPro"/>
</dbReference>
<dbReference type="GO" id="GO:0043386">
    <property type="term" value="P:mycotoxin biosynthetic process"/>
    <property type="evidence" value="ECO:0007669"/>
    <property type="project" value="UniProtKB-ARBA"/>
</dbReference>
<dbReference type="CDD" id="cd11041">
    <property type="entry name" value="CYP503A1-like"/>
    <property type="match status" value="1"/>
</dbReference>
<dbReference type="Gene3D" id="1.10.630.10">
    <property type="entry name" value="Cytochrome P450"/>
    <property type="match status" value="1"/>
</dbReference>
<dbReference type="InterPro" id="IPR001128">
    <property type="entry name" value="Cyt_P450"/>
</dbReference>
<dbReference type="InterPro" id="IPR017972">
    <property type="entry name" value="Cyt_P450_CS"/>
</dbReference>
<dbReference type="InterPro" id="IPR002403">
    <property type="entry name" value="Cyt_P450_E_grp-IV"/>
</dbReference>
<dbReference type="InterPro" id="IPR036396">
    <property type="entry name" value="Cyt_P450_sf"/>
</dbReference>
<dbReference type="PANTHER" id="PTHR46206">
    <property type="entry name" value="CYTOCHROME P450"/>
    <property type="match status" value="1"/>
</dbReference>
<dbReference type="PANTHER" id="PTHR46206:SF2">
    <property type="entry name" value="CYTOCHROME P450 MONOOXYGENASE AUSG-RELATED"/>
    <property type="match status" value="1"/>
</dbReference>
<dbReference type="Pfam" id="PF00067">
    <property type="entry name" value="p450"/>
    <property type="match status" value="1"/>
</dbReference>
<dbReference type="PRINTS" id="PR00465">
    <property type="entry name" value="EP450IV"/>
</dbReference>
<dbReference type="PRINTS" id="PR00385">
    <property type="entry name" value="P450"/>
</dbReference>
<dbReference type="SUPFAM" id="SSF48264">
    <property type="entry name" value="Cytochrome P450"/>
    <property type="match status" value="1"/>
</dbReference>
<dbReference type="PROSITE" id="PS00086">
    <property type="entry name" value="CYTOCHROME_P450"/>
    <property type="match status" value="1"/>
</dbReference>
<comment type="function">
    <text evidence="2 3 6">Cytochrome P450 monooxygenase; part of the gene cluster that mediates the biosynthesis of paraherquamide, a fungal indole alkaloid that belongs to a family of natural products containing a characteristic bicyclo[2.2.2]diazaoctane core (PubMed:23213353). The first steps in the biosynthesis of paraherquamide is the production of the beta-methyl-proline precursor from L-isoleucine (Probable). They require oxidation of a terminally hydroxylated L-isoleucine to the corresponding aldehyde by enzymes which have still to be identified (Probable). Spontaneous cyclization and dehydration would yield the 4-methyl pyrolline-5-carboxylic acid, which is then reduced by the pyrroline-5-carboxylate reductase phqD leading to the beta-methyl-proline precursor (Probable). The next step of paraherquamide biosynthesis involves coupling of beta-methyl-proline and L-tryptophan by the bimodular NRPS phqB, to produce a monooxopiperazine intermediate (Probable). The reductase (R) domain of phqB utilizes NADPH for hydride transfer to reduce the thioester bond of the T domain-tethered linear dipeptide to a hemithioaminal intermediate, which spontaneously cleaves the C-S bond to release the aldehyde product (PubMed:31548667). This compound undergoes spontaneous cyclization and dehydration to give a dienamine which is reverse prenylated at C-2 by the reverse prenyltransferase phqJ (Probable). The other prenyltransferase present in the cluster, phqI may be a redundant gene in the pathway (Probable). During biosynthetic assembly, the key step to produce the polycyclic core is catalyzed by the bifunctional reductase and intramolecular [4+2] Diels-Alderase, phqE, resulting in formation of the [2.2.2] diazaoctane intermediate preparaherquamide (PubMed:31548667). Following formation of preparaherquamide, an indole 2,3-epoxidation-initiated pinacol-like rearrangement is catalyzed by the phqK FAD-dependent monooxygenase (Probable). The prenyltransferase phqA, the cytochrome P450 monooxygenase phqL, and the FAD-linked oxidoreductase phqH (or the cytochrome P450 monooxygenase phqM), are proposed to be involved in the formation of the pyran ring (Probable). The FAD-dependent monooxygenase phqK is likely responsible for generation of the spiro-oxindole, and the N-methylation is likely mediated by the phqN methyltransferase leading to the isolable natural product paraherquamide F (Probable). However, the order of these biosynthetic steps has still to be determined (Probable). In late-stage paraherquamide biosynthesis, the third P450 monooxygenase, phqO, is probably responsible for the C-14 hydroxylation, transforming paraherquamide F to paraherquamide G, and paraherquamide E to the final product paraherquamide A (Probable). The expansion from the 6-membered ring pyran (in paraherquamides F and G) to the 7-membered dioxepin ring (in paraherquamides A and E) represents a poorly understood but intriguing process that probably involves the 2-oxoglutarate-dependent dioxygenase phqC (Probable). Finally, the remaining members of the paraherquamide cluster, including phqI as well as phqM (or phqH), do not have a clearly prescribed role and appear to be redundant (Probable).</text>
</comment>
<comment type="cofactor">
    <cofactor evidence="1">
        <name>heme</name>
        <dbReference type="ChEBI" id="CHEBI:30413"/>
    </cofactor>
</comment>
<comment type="pathway">
    <text evidence="6">Alkaloid biosynthesis.</text>
</comment>
<comment type="similarity">
    <text evidence="5">Belongs to the cytochrome P450 family.</text>
</comment>
<proteinExistence type="inferred from homology"/>
<name>PHQO_PENFE</name>
<sequence>MSKYLLMSFTEGSMSTWHYLAMLTTIWLVYQYLKPVPIVPGLPVINRAERWDFFSIKMKRRFLNNAAALMKEGFEQPKLVLSPDYADELKNDARFSLEDAGLRRHYRMKPASLFKIIGQTTPISGRAFLGPEVCGDIRWIEATMGYLEMGVRTAFLLQVFPRFLFPLQRWFPLCRKVRKHIDMAGTILRPVIDSRRADGRPAQDAISWFDEAAAGETYNPVYSQLSLSFASTHTTADTMTKVIIHLAENPAVVTDLRKEVVEAIAKHGELTKTALSQMNLLDSTLKESQRLEPLASATMNRVTREEVTLSNGLWIPRNMYVLVSGHRMRDPTLYPDPEKFDAYRFVKMREIEKKKSDCAYTAATVDHMGFGYGKHSCPGRFFAAHEVKIILCHLILKYEFKLPEDQARTYLLAGFFTSAGPENELLVRRRVEEIAL</sequence>
<gene>
    <name evidence="4" type="primary">phqO</name>
</gene>
<accession>L0E307</accession>